<comment type="function">
    <text evidence="1">Variant histone H2A which can replace H2A in some nucleosomes. Nucleosomes wrap and compact DNA into chromatin, limiting DNA accessibility to the cellular machineries which require DNA as a template. Histones thereby play a central role in transcription regulation, DNA repair, DNA replication and chromosomal stability. DNA accessibility is regulated via a complex set of post-translational modifications of histones, also called histone code, and nucleosome remodeling. This variant is enriched at promoters, it may keep them in a repressed state until the appropriate activation signal is received. Near telomeres, it may counteract gene silencing caused by the spread of heterochromatin proteins. Required for the RNA polymerase II and SPT15/TBP recruitment to the target genes. Involved in chromosome stability (By similarity).</text>
</comment>
<comment type="subunit">
    <text evidence="1">The nucleosome is a histone octamer containing two molecules each of H2A, H2B, H3 and H4 assembled in one H3-H4 heterotetramer and two H2A-H2B heterodimers. The octamer wraps approximately 147 bp of DNA. H2A or its variant H2A.Z forms a heterodimer with H2B. H2A.Z associates with the VPS72/SWC2 subunit of the SWR1 chromatin remodeling complex. Also interacts with RBP1/DNA-directed RNA polymerase II largest subunit (By similarity).</text>
</comment>
<comment type="subcellular location">
    <subcellularLocation>
        <location evidence="1">Nucleus</location>
    </subcellularLocation>
    <subcellularLocation>
        <location evidence="1">Chromosome</location>
    </subcellularLocation>
</comment>
<comment type="PTM">
    <text evidence="1">Acetylated once deposited into chromatin.</text>
</comment>
<comment type="similarity">
    <text evidence="3">Belongs to the histone H2A family.</text>
</comment>
<evidence type="ECO:0000250" key="1"/>
<evidence type="ECO:0000256" key="2">
    <source>
        <dbReference type="SAM" id="MobiDB-lite"/>
    </source>
</evidence>
<evidence type="ECO:0000305" key="3"/>
<accession>P0CO00</accession>
<accession>Q55LU3</accession>
<accession>Q5K8Y2</accession>
<sequence length="138" mass="14714">MSSKVGGGKGGKSKTSSEAKVLTTRSSKAGLQFPVGRIHRFLRNKNANNVRIGAKAAVYVASIMEYLTAEVLELAGNAAKDLRVKRITPRHLQLAIRGDEELDLLIRATIAGGGVLPHIHKSLVAKNAPLKKPKALDA</sequence>
<organism>
    <name type="scientific">Cryptococcus neoformans var. neoformans serotype D (strain JEC21 / ATCC MYA-565)</name>
    <name type="common">Filobasidiella neoformans</name>
    <dbReference type="NCBI Taxonomy" id="214684"/>
    <lineage>
        <taxon>Eukaryota</taxon>
        <taxon>Fungi</taxon>
        <taxon>Dikarya</taxon>
        <taxon>Basidiomycota</taxon>
        <taxon>Agaricomycotina</taxon>
        <taxon>Tremellomycetes</taxon>
        <taxon>Tremellales</taxon>
        <taxon>Cryptococcaceae</taxon>
        <taxon>Cryptococcus</taxon>
        <taxon>Cryptococcus neoformans species complex</taxon>
    </lineage>
</organism>
<keyword id="KW-0007">Acetylation</keyword>
<keyword id="KW-0010">Activator</keyword>
<keyword id="KW-0156">Chromatin regulator</keyword>
<keyword id="KW-0158">Chromosome</keyword>
<keyword id="KW-0238">DNA-binding</keyword>
<keyword id="KW-0544">Nucleosome core</keyword>
<keyword id="KW-0539">Nucleus</keyword>
<keyword id="KW-1185">Reference proteome</keyword>
<keyword id="KW-0804">Transcription</keyword>
<keyword id="KW-0805">Transcription regulation</keyword>
<gene>
    <name type="primary">HTZ1</name>
    <name type="ordered locus">CNL04080</name>
</gene>
<protein>
    <recommendedName>
        <fullName>Histone H2A.Z</fullName>
    </recommendedName>
</protein>
<dbReference type="EMBL" id="AE017352">
    <property type="protein sequence ID" value="AAW46445.1"/>
    <property type="molecule type" value="Genomic_DNA"/>
</dbReference>
<dbReference type="RefSeq" id="XP_567962.1">
    <property type="nucleotide sequence ID" value="XM_567962.1"/>
</dbReference>
<dbReference type="SMR" id="P0CO00"/>
<dbReference type="FunCoup" id="P0CO00">
    <property type="interactions" value="382"/>
</dbReference>
<dbReference type="STRING" id="214684.P0CO00"/>
<dbReference type="PaxDb" id="214684-P0CO00"/>
<dbReference type="EnsemblFungi" id="AAW46445">
    <property type="protein sequence ID" value="AAW46445"/>
    <property type="gene ID" value="CNL04080"/>
</dbReference>
<dbReference type="GeneID" id="3254928"/>
<dbReference type="KEGG" id="cne:CNL04080"/>
<dbReference type="VEuPathDB" id="FungiDB:CNL04080"/>
<dbReference type="eggNOG" id="KOG1757">
    <property type="taxonomic scope" value="Eukaryota"/>
</dbReference>
<dbReference type="HOGENOM" id="CLU_062828_2_1_1"/>
<dbReference type="InParanoid" id="P0CO00"/>
<dbReference type="OMA" id="MNKKGAP"/>
<dbReference type="OrthoDB" id="9421954at2759"/>
<dbReference type="Proteomes" id="UP000002149">
    <property type="component" value="Chromosome 12"/>
</dbReference>
<dbReference type="GO" id="GO:0000791">
    <property type="term" value="C:euchromatin"/>
    <property type="evidence" value="ECO:0007669"/>
    <property type="project" value="EnsemblFungi"/>
</dbReference>
<dbReference type="GO" id="GO:0000786">
    <property type="term" value="C:nucleosome"/>
    <property type="evidence" value="ECO:0000318"/>
    <property type="project" value="GO_Central"/>
</dbReference>
<dbReference type="GO" id="GO:0005634">
    <property type="term" value="C:nucleus"/>
    <property type="evidence" value="ECO:0000318"/>
    <property type="project" value="GO_Central"/>
</dbReference>
<dbReference type="GO" id="GO:0031490">
    <property type="term" value="F:chromatin DNA binding"/>
    <property type="evidence" value="ECO:0007669"/>
    <property type="project" value="EnsemblFungi"/>
</dbReference>
<dbReference type="GO" id="GO:0042802">
    <property type="term" value="F:identical protein binding"/>
    <property type="evidence" value="ECO:0007669"/>
    <property type="project" value="EnsemblFungi"/>
</dbReference>
<dbReference type="GO" id="GO:0046982">
    <property type="term" value="F:protein heterodimerization activity"/>
    <property type="evidence" value="ECO:0007669"/>
    <property type="project" value="InterPro"/>
</dbReference>
<dbReference type="GO" id="GO:0000978">
    <property type="term" value="F:RNA polymerase II cis-regulatory region sequence-specific DNA binding"/>
    <property type="evidence" value="ECO:0007669"/>
    <property type="project" value="EnsemblFungi"/>
</dbReference>
<dbReference type="GO" id="GO:0030527">
    <property type="term" value="F:structural constituent of chromatin"/>
    <property type="evidence" value="ECO:0000318"/>
    <property type="project" value="GO_Central"/>
</dbReference>
<dbReference type="GO" id="GO:0140898">
    <property type="term" value="P:CENP-A eviction from euchromatin"/>
    <property type="evidence" value="ECO:0007669"/>
    <property type="project" value="EnsemblFungi"/>
</dbReference>
<dbReference type="GO" id="GO:0031507">
    <property type="term" value="P:heterochromatin formation"/>
    <property type="evidence" value="ECO:0000318"/>
    <property type="project" value="GO_Central"/>
</dbReference>
<dbReference type="GO" id="GO:0070481">
    <property type="term" value="P:nuclear-transcribed mRNA catabolic process, non-stop decay"/>
    <property type="evidence" value="ECO:0007669"/>
    <property type="project" value="EnsemblFungi"/>
</dbReference>
<dbReference type="GO" id="GO:0006357">
    <property type="term" value="P:regulation of transcription by RNA polymerase II"/>
    <property type="evidence" value="ECO:0007669"/>
    <property type="project" value="EnsemblFungi"/>
</dbReference>
<dbReference type="GO" id="GO:0030466">
    <property type="term" value="P:silent mating-type cassette heterochromatin formation"/>
    <property type="evidence" value="ECO:0007669"/>
    <property type="project" value="EnsemblFungi"/>
</dbReference>
<dbReference type="GO" id="GO:0006368">
    <property type="term" value="P:transcription elongation by RNA polymerase II"/>
    <property type="evidence" value="ECO:0007669"/>
    <property type="project" value="EnsemblFungi"/>
</dbReference>
<dbReference type="CDD" id="cd00074">
    <property type="entry name" value="HFD_H2A"/>
    <property type="match status" value="1"/>
</dbReference>
<dbReference type="FunFam" id="1.10.20.10:FF:000005">
    <property type="entry name" value="Histone H2A"/>
    <property type="match status" value="1"/>
</dbReference>
<dbReference type="Gene3D" id="1.10.20.10">
    <property type="entry name" value="Histone, subunit A"/>
    <property type="match status" value="1"/>
</dbReference>
<dbReference type="InterPro" id="IPR009072">
    <property type="entry name" value="Histone-fold"/>
</dbReference>
<dbReference type="InterPro" id="IPR002119">
    <property type="entry name" value="Histone_H2A"/>
</dbReference>
<dbReference type="InterPro" id="IPR007125">
    <property type="entry name" value="Histone_H2A/H2B/H3"/>
</dbReference>
<dbReference type="InterPro" id="IPR032454">
    <property type="entry name" value="Histone_H2A_C"/>
</dbReference>
<dbReference type="InterPro" id="IPR032458">
    <property type="entry name" value="Histone_H2A_CS"/>
</dbReference>
<dbReference type="PANTHER" id="PTHR23430">
    <property type="entry name" value="HISTONE H2A"/>
    <property type="match status" value="1"/>
</dbReference>
<dbReference type="Pfam" id="PF00125">
    <property type="entry name" value="Histone"/>
    <property type="match status" value="1"/>
</dbReference>
<dbReference type="Pfam" id="PF16211">
    <property type="entry name" value="Histone_H2A_C"/>
    <property type="match status" value="1"/>
</dbReference>
<dbReference type="PRINTS" id="PR00620">
    <property type="entry name" value="HISTONEH2A"/>
</dbReference>
<dbReference type="SMART" id="SM00414">
    <property type="entry name" value="H2A"/>
    <property type="match status" value="1"/>
</dbReference>
<dbReference type="SUPFAM" id="SSF47113">
    <property type="entry name" value="Histone-fold"/>
    <property type="match status" value="1"/>
</dbReference>
<dbReference type="PROSITE" id="PS00046">
    <property type="entry name" value="HISTONE_H2A"/>
    <property type="match status" value="1"/>
</dbReference>
<name>H2AZ_CRYNJ</name>
<reference key="1">
    <citation type="journal article" date="2005" name="Science">
        <title>The genome of the basidiomycetous yeast and human pathogen Cryptococcus neoformans.</title>
        <authorList>
            <person name="Loftus B.J."/>
            <person name="Fung E."/>
            <person name="Roncaglia P."/>
            <person name="Rowley D."/>
            <person name="Amedeo P."/>
            <person name="Bruno D."/>
            <person name="Vamathevan J."/>
            <person name="Miranda M."/>
            <person name="Anderson I.J."/>
            <person name="Fraser J.A."/>
            <person name="Allen J.E."/>
            <person name="Bosdet I.E."/>
            <person name="Brent M.R."/>
            <person name="Chiu R."/>
            <person name="Doering T.L."/>
            <person name="Donlin M.J."/>
            <person name="D'Souza C.A."/>
            <person name="Fox D.S."/>
            <person name="Grinberg V."/>
            <person name="Fu J."/>
            <person name="Fukushima M."/>
            <person name="Haas B.J."/>
            <person name="Huang J.C."/>
            <person name="Janbon G."/>
            <person name="Jones S.J.M."/>
            <person name="Koo H.L."/>
            <person name="Krzywinski M.I."/>
            <person name="Kwon-Chung K.J."/>
            <person name="Lengeler K.B."/>
            <person name="Maiti R."/>
            <person name="Marra M.A."/>
            <person name="Marra R.E."/>
            <person name="Mathewson C.A."/>
            <person name="Mitchell T.G."/>
            <person name="Pertea M."/>
            <person name="Riggs F.R."/>
            <person name="Salzberg S.L."/>
            <person name="Schein J.E."/>
            <person name="Shvartsbeyn A."/>
            <person name="Shin H."/>
            <person name="Shumway M."/>
            <person name="Specht C.A."/>
            <person name="Suh B.B."/>
            <person name="Tenney A."/>
            <person name="Utterback T.R."/>
            <person name="Wickes B.L."/>
            <person name="Wortman J.R."/>
            <person name="Wye N.H."/>
            <person name="Kronstad J.W."/>
            <person name="Lodge J.K."/>
            <person name="Heitman J."/>
            <person name="Davis R.W."/>
            <person name="Fraser C.M."/>
            <person name="Hyman R.W."/>
        </authorList>
    </citation>
    <scope>NUCLEOTIDE SEQUENCE [LARGE SCALE GENOMIC DNA]</scope>
    <source>
        <strain>JEC21 / ATCC MYA-565</strain>
    </source>
</reference>
<feature type="chain" id="PRO_0000055331" description="Histone H2A.Z">
    <location>
        <begin position="1"/>
        <end position="138"/>
    </location>
</feature>
<feature type="region of interest" description="Disordered" evidence="2">
    <location>
        <begin position="1"/>
        <end position="21"/>
    </location>
</feature>
<feature type="compositionally biased region" description="Gly residues" evidence="2">
    <location>
        <begin position="1"/>
        <end position="10"/>
    </location>
</feature>
<feature type="modified residue" description="N6-acetyllysine" evidence="1">
    <location>
        <position position="4"/>
    </location>
</feature>
<feature type="modified residue" description="N6-acetyllysine" evidence="1">
    <location>
        <position position="9"/>
    </location>
</feature>
<proteinExistence type="inferred from homology"/>